<accession>Q3YSP8</accession>
<keyword id="KW-0418">Kinase</keyword>
<keyword id="KW-0547">Nucleotide-binding</keyword>
<keyword id="KW-0723">Serine/threonine-protein kinase</keyword>
<keyword id="KW-0808">Transferase</keyword>
<evidence type="ECO:0000255" key="1">
    <source>
        <dbReference type="HAMAP-Rule" id="MF_00921"/>
    </source>
</evidence>
<dbReference type="EC" id="2.7.11.32" evidence="1"/>
<dbReference type="EC" id="2.7.4.27" evidence="1"/>
<dbReference type="EMBL" id="CP000107">
    <property type="protein sequence ID" value="AAZ68257.1"/>
    <property type="molecule type" value="Genomic_DNA"/>
</dbReference>
<dbReference type="RefSeq" id="WP_011304335.1">
    <property type="nucleotide sequence ID" value="NC_007354.1"/>
</dbReference>
<dbReference type="SMR" id="Q3YSP8"/>
<dbReference type="FunCoup" id="Q3YSP8">
    <property type="interactions" value="153"/>
</dbReference>
<dbReference type="STRING" id="269484.Ecaj_0207"/>
<dbReference type="KEGG" id="ecn:Ecaj_0207"/>
<dbReference type="eggNOG" id="COG1806">
    <property type="taxonomic scope" value="Bacteria"/>
</dbReference>
<dbReference type="HOGENOM" id="CLU_046206_2_0_5"/>
<dbReference type="InParanoid" id="Q3YSP8"/>
<dbReference type="Proteomes" id="UP000000435">
    <property type="component" value="Chromosome"/>
</dbReference>
<dbReference type="GO" id="GO:0043531">
    <property type="term" value="F:ADP binding"/>
    <property type="evidence" value="ECO:0007669"/>
    <property type="project" value="UniProtKB-UniRule"/>
</dbReference>
<dbReference type="GO" id="GO:0005524">
    <property type="term" value="F:ATP binding"/>
    <property type="evidence" value="ECO:0007669"/>
    <property type="project" value="InterPro"/>
</dbReference>
<dbReference type="GO" id="GO:0016776">
    <property type="term" value="F:phosphotransferase activity, phosphate group as acceptor"/>
    <property type="evidence" value="ECO:0007669"/>
    <property type="project" value="UniProtKB-UniRule"/>
</dbReference>
<dbReference type="GO" id="GO:0004674">
    <property type="term" value="F:protein serine/threonine kinase activity"/>
    <property type="evidence" value="ECO:0007669"/>
    <property type="project" value="UniProtKB-UniRule"/>
</dbReference>
<dbReference type="HAMAP" id="MF_00921">
    <property type="entry name" value="PDRP"/>
    <property type="match status" value="1"/>
</dbReference>
<dbReference type="InterPro" id="IPR005177">
    <property type="entry name" value="Kinase-pyrophosphorylase"/>
</dbReference>
<dbReference type="InterPro" id="IPR026565">
    <property type="entry name" value="PPDK_reg"/>
</dbReference>
<dbReference type="NCBIfam" id="NF003742">
    <property type="entry name" value="PRK05339.1"/>
    <property type="match status" value="1"/>
</dbReference>
<dbReference type="PANTHER" id="PTHR31756">
    <property type="entry name" value="PYRUVATE, PHOSPHATE DIKINASE REGULATORY PROTEIN 1, CHLOROPLASTIC"/>
    <property type="match status" value="1"/>
</dbReference>
<dbReference type="PANTHER" id="PTHR31756:SF3">
    <property type="entry name" value="PYRUVATE, PHOSPHATE DIKINASE REGULATORY PROTEIN 1, CHLOROPLASTIC"/>
    <property type="match status" value="1"/>
</dbReference>
<dbReference type="Pfam" id="PF03618">
    <property type="entry name" value="Kinase-PPPase"/>
    <property type="match status" value="1"/>
</dbReference>
<sequence length="273" mass="31595">MNASVVLNLHLISDSTCETVAAVAKSALEHFRSIEVNEFVWSFINSCEQIDKIMSLIEHDKYNFIMYTMFDDDIRRYLKQKAEVQEIPCIPVLSRVIRELSCYLHVKKDPYVNTGMGLDDEYFTRIDAINYTIAHDDGQNLWDIDKADIIILGVSRTSKSPTSIYLAYRGYRVVNIPLVNSINLSVDLSSMKNKLIVGLTIDIDRLIEIRKTRLVSMRNQNNCQYVDYEHVLVEIKETKRICMQNGWPIIDVTQKSVEEIAATIIQYFNKMQH</sequence>
<name>PDRP_EHRCJ</name>
<organism>
    <name type="scientific">Ehrlichia canis (strain Jake)</name>
    <dbReference type="NCBI Taxonomy" id="269484"/>
    <lineage>
        <taxon>Bacteria</taxon>
        <taxon>Pseudomonadati</taxon>
        <taxon>Pseudomonadota</taxon>
        <taxon>Alphaproteobacteria</taxon>
        <taxon>Rickettsiales</taxon>
        <taxon>Anaplasmataceae</taxon>
        <taxon>Ehrlichia</taxon>
    </lineage>
</organism>
<protein>
    <recommendedName>
        <fullName evidence="1">Putative pyruvate, phosphate dikinase regulatory protein</fullName>
        <shortName evidence="1">PPDK regulatory protein</shortName>
        <ecNumber evidence="1">2.7.11.32</ecNumber>
        <ecNumber evidence="1">2.7.4.27</ecNumber>
    </recommendedName>
</protein>
<reference key="1">
    <citation type="journal article" date="2006" name="J. Bacteriol.">
        <title>The genome of the obligately intracellular bacterium Ehrlichia canis reveals themes of complex membrane structure and immune evasion strategies.</title>
        <authorList>
            <person name="Mavromatis K."/>
            <person name="Doyle C.K."/>
            <person name="Lykidis A."/>
            <person name="Ivanova N."/>
            <person name="Francino M.P."/>
            <person name="Chain P."/>
            <person name="Shin M."/>
            <person name="Malfatti S."/>
            <person name="Larimer F."/>
            <person name="Copeland A."/>
            <person name="Detter J.C."/>
            <person name="Land M."/>
            <person name="Richardson P.M."/>
            <person name="Yu X.J."/>
            <person name="Walker D.H."/>
            <person name="McBride J.W."/>
            <person name="Kyrpides N.C."/>
        </authorList>
    </citation>
    <scope>NUCLEOTIDE SEQUENCE [LARGE SCALE GENOMIC DNA]</scope>
    <source>
        <strain>Jake</strain>
    </source>
</reference>
<feature type="chain" id="PRO_0000196652" description="Putative pyruvate, phosphate dikinase regulatory protein">
    <location>
        <begin position="1"/>
        <end position="273"/>
    </location>
</feature>
<feature type="binding site" evidence="1">
    <location>
        <begin position="153"/>
        <end position="160"/>
    </location>
    <ligand>
        <name>ADP</name>
        <dbReference type="ChEBI" id="CHEBI:456216"/>
    </ligand>
</feature>
<gene>
    <name type="ordered locus">Ecaj_0207</name>
</gene>
<proteinExistence type="inferred from homology"/>
<comment type="function">
    <text evidence="1">Bifunctional serine/threonine kinase and phosphorylase involved in the regulation of the pyruvate, phosphate dikinase (PPDK) by catalyzing its phosphorylation/dephosphorylation.</text>
</comment>
<comment type="catalytic activity">
    <reaction evidence="1">
        <text>N(tele)-phospho-L-histidyl/L-threonyl-[pyruvate, phosphate dikinase] + ADP = N(tele)-phospho-L-histidyl/O-phospho-L-threonyl-[pyruvate, phosphate dikinase] + AMP + H(+)</text>
        <dbReference type="Rhea" id="RHEA:43692"/>
        <dbReference type="Rhea" id="RHEA-COMP:10650"/>
        <dbReference type="Rhea" id="RHEA-COMP:10651"/>
        <dbReference type="ChEBI" id="CHEBI:15378"/>
        <dbReference type="ChEBI" id="CHEBI:30013"/>
        <dbReference type="ChEBI" id="CHEBI:61977"/>
        <dbReference type="ChEBI" id="CHEBI:83586"/>
        <dbReference type="ChEBI" id="CHEBI:456215"/>
        <dbReference type="ChEBI" id="CHEBI:456216"/>
        <dbReference type="EC" id="2.7.11.32"/>
    </reaction>
</comment>
<comment type="catalytic activity">
    <reaction evidence="1">
        <text>N(tele)-phospho-L-histidyl/O-phospho-L-threonyl-[pyruvate, phosphate dikinase] + phosphate + H(+) = N(tele)-phospho-L-histidyl/L-threonyl-[pyruvate, phosphate dikinase] + diphosphate</text>
        <dbReference type="Rhea" id="RHEA:43696"/>
        <dbReference type="Rhea" id="RHEA-COMP:10650"/>
        <dbReference type="Rhea" id="RHEA-COMP:10651"/>
        <dbReference type="ChEBI" id="CHEBI:15378"/>
        <dbReference type="ChEBI" id="CHEBI:30013"/>
        <dbReference type="ChEBI" id="CHEBI:33019"/>
        <dbReference type="ChEBI" id="CHEBI:43474"/>
        <dbReference type="ChEBI" id="CHEBI:61977"/>
        <dbReference type="ChEBI" id="CHEBI:83586"/>
        <dbReference type="EC" id="2.7.4.27"/>
    </reaction>
</comment>
<comment type="similarity">
    <text evidence="1">Belongs to the pyruvate, phosphate/water dikinase regulatory protein family. PDRP subfamily.</text>
</comment>